<organism>
    <name type="scientific">Neurospora crassa (strain ATCC 24698 / 74-OR23-1A / CBS 708.71 / DSM 1257 / FGSC 987)</name>
    <dbReference type="NCBI Taxonomy" id="367110"/>
    <lineage>
        <taxon>Eukaryota</taxon>
        <taxon>Fungi</taxon>
        <taxon>Dikarya</taxon>
        <taxon>Ascomycota</taxon>
        <taxon>Pezizomycotina</taxon>
        <taxon>Sordariomycetes</taxon>
        <taxon>Sordariomycetidae</taxon>
        <taxon>Sordariales</taxon>
        <taxon>Sordariaceae</taxon>
        <taxon>Neurospora</taxon>
    </lineage>
</organism>
<accession>Q7S2Y8</accession>
<protein>
    <recommendedName>
        <fullName>Protein dml-1</fullName>
    </recommendedName>
</protein>
<evidence type="ECO:0000250" key="1"/>
<evidence type="ECO:0000256" key="2">
    <source>
        <dbReference type="SAM" id="MobiDB-lite"/>
    </source>
</evidence>
<evidence type="ECO:0000305" key="3"/>
<comment type="function">
    <text evidence="1">Involved in the partitioning of the mitochondrial organelle and mitochondrial DNA (mtDNA) inheritance.</text>
</comment>
<comment type="subcellular location">
    <subcellularLocation>
        <location evidence="1">Mitochondrion</location>
    </subcellularLocation>
</comment>
<comment type="similarity">
    <text evidence="3">Belongs to the misato family.</text>
</comment>
<proteinExistence type="inferred from homology"/>
<gene>
    <name type="primary">dml-1</name>
    <name type="ORF">NCU08981</name>
    <name type="ORF">NCU11398</name>
</gene>
<keyword id="KW-0496">Mitochondrion</keyword>
<keyword id="KW-1185">Reference proteome</keyword>
<name>DML1_NEUCR</name>
<dbReference type="EMBL" id="CM002238">
    <property type="protein sequence ID" value="EAA29773.2"/>
    <property type="molecule type" value="Genomic_DNA"/>
</dbReference>
<dbReference type="RefSeq" id="XP_959009.2">
    <property type="nucleotide sequence ID" value="XM_953916.3"/>
</dbReference>
<dbReference type="FunCoup" id="Q7S2Y8">
    <property type="interactions" value="66"/>
</dbReference>
<dbReference type="STRING" id="367110.Q7S2Y8"/>
<dbReference type="PaxDb" id="5141-EFNCRP00000008954"/>
<dbReference type="EnsemblFungi" id="EAA29773">
    <property type="protein sequence ID" value="EAA29773"/>
    <property type="gene ID" value="NCU08981"/>
</dbReference>
<dbReference type="GeneID" id="23568500"/>
<dbReference type="KEGG" id="ncr:NCU08981"/>
<dbReference type="VEuPathDB" id="FungiDB:NCU08981"/>
<dbReference type="HOGENOM" id="CLU_022511_2_0_1"/>
<dbReference type="InParanoid" id="Q7S2Y8"/>
<dbReference type="OMA" id="SYETGWM"/>
<dbReference type="OrthoDB" id="271881at2759"/>
<dbReference type="Proteomes" id="UP000001805">
    <property type="component" value="Chromosome 3, Linkage Group III"/>
</dbReference>
<dbReference type="GO" id="GO:0005737">
    <property type="term" value="C:cytoplasm"/>
    <property type="evidence" value="ECO:0000318"/>
    <property type="project" value="GO_Central"/>
</dbReference>
<dbReference type="GO" id="GO:0005739">
    <property type="term" value="C:mitochondrion"/>
    <property type="evidence" value="ECO:0000318"/>
    <property type="project" value="GO_Central"/>
</dbReference>
<dbReference type="GO" id="GO:0007005">
    <property type="term" value="P:mitochondrion organization"/>
    <property type="evidence" value="ECO:0000318"/>
    <property type="project" value="GO_Central"/>
</dbReference>
<dbReference type="CDD" id="cd06060">
    <property type="entry name" value="misato"/>
    <property type="match status" value="1"/>
</dbReference>
<dbReference type="Gene3D" id="3.40.50.1440">
    <property type="entry name" value="Tubulin/FtsZ, GTPase domain"/>
    <property type="match status" value="1"/>
</dbReference>
<dbReference type="InterPro" id="IPR049942">
    <property type="entry name" value="DML1/Misato"/>
</dbReference>
<dbReference type="InterPro" id="IPR029209">
    <property type="entry name" value="DML1/Misato_tubulin"/>
</dbReference>
<dbReference type="InterPro" id="IPR019605">
    <property type="entry name" value="Misato_II_tubulin-like"/>
</dbReference>
<dbReference type="InterPro" id="IPR036525">
    <property type="entry name" value="Tubulin/FtsZ_GTPase_sf"/>
</dbReference>
<dbReference type="PANTHER" id="PTHR13391">
    <property type="entry name" value="MITOCHONDRIAL DISTRIBUTION REGULATOR MISATO"/>
    <property type="match status" value="1"/>
</dbReference>
<dbReference type="PANTHER" id="PTHR13391:SF0">
    <property type="entry name" value="PROTEIN MISATO HOMOLOG 1"/>
    <property type="match status" value="1"/>
</dbReference>
<dbReference type="Pfam" id="PF10644">
    <property type="entry name" value="Misat_Tub_SegII"/>
    <property type="match status" value="1"/>
</dbReference>
<dbReference type="Pfam" id="PF14881">
    <property type="entry name" value="Tubulin_3"/>
    <property type="match status" value="1"/>
</dbReference>
<dbReference type="SUPFAM" id="SSF52490">
    <property type="entry name" value="Tubulin nucleotide-binding domain-like"/>
    <property type="match status" value="1"/>
</dbReference>
<sequence>MHEIITLQLGQQSNYLATHFWNAQESYFTYSEDQEPAVNHDIHWRPGIGADGTETYMPRTVIYDLKGGFGSMAKTNALYNDLEEGQTPQALWNGPTVLQKQPAIPQSAYQQSLDAGLEPPPLTTDTVRYWSDFNRVFYHPRSVVQLNEYELNSSIMPFERYATGEDLFASLDKEHDLLDRDLRPFIEEADQMQGIQVMTGLDDAWGGFAAKYLERIRDEYGKTAMFVWGSEQESVMRAGGLSREKRLLRLANKARTMTEVYKYASVVVPFTVPATLPGSVVLDAGSQWHNTALSAAAIESVTLPSRLRDPANRDTMATLADSLNAMGKQNVASLGMSFAPEPTEEEDVVMEGTQDFRQRQLLNQKSSRHAAVMVKENPEGVFLDINFTPTDQLDYVRRRGGGDDDRPRVFSQMLTSRGYEIDEQVQEAKEAEEDERFRRRSSYETVMKSYHTPLRFPLLDSFPQIFRDDSGEPLKRGGAINVTSSLSTDASVHKRLKSLRTTVGRSIGLEDREQLGNELAEMADEYHEGWSSGSDDGDDD</sequence>
<feature type="chain" id="PRO_0000285338" description="Protein dml-1">
    <location>
        <begin position="1"/>
        <end position="540"/>
    </location>
</feature>
<feature type="region of interest" description="Disordered" evidence="2">
    <location>
        <begin position="517"/>
        <end position="540"/>
    </location>
</feature>
<reference key="1">
    <citation type="journal article" date="2003" name="Nature">
        <title>The genome sequence of the filamentous fungus Neurospora crassa.</title>
        <authorList>
            <person name="Galagan J.E."/>
            <person name="Calvo S.E."/>
            <person name="Borkovich K.A."/>
            <person name="Selker E.U."/>
            <person name="Read N.D."/>
            <person name="Jaffe D.B."/>
            <person name="FitzHugh W."/>
            <person name="Ma L.-J."/>
            <person name="Smirnov S."/>
            <person name="Purcell S."/>
            <person name="Rehman B."/>
            <person name="Elkins T."/>
            <person name="Engels R."/>
            <person name="Wang S."/>
            <person name="Nielsen C.B."/>
            <person name="Butler J."/>
            <person name="Endrizzi M."/>
            <person name="Qui D."/>
            <person name="Ianakiev P."/>
            <person name="Bell-Pedersen D."/>
            <person name="Nelson M.A."/>
            <person name="Werner-Washburne M."/>
            <person name="Selitrennikoff C.P."/>
            <person name="Kinsey J.A."/>
            <person name="Braun E.L."/>
            <person name="Zelter A."/>
            <person name="Schulte U."/>
            <person name="Kothe G.O."/>
            <person name="Jedd G."/>
            <person name="Mewes H.-W."/>
            <person name="Staben C."/>
            <person name="Marcotte E."/>
            <person name="Greenberg D."/>
            <person name="Roy A."/>
            <person name="Foley K."/>
            <person name="Naylor J."/>
            <person name="Stange-Thomann N."/>
            <person name="Barrett R."/>
            <person name="Gnerre S."/>
            <person name="Kamal M."/>
            <person name="Kamvysselis M."/>
            <person name="Mauceli E.W."/>
            <person name="Bielke C."/>
            <person name="Rudd S."/>
            <person name="Frishman D."/>
            <person name="Krystofova S."/>
            <person name="Rasmussen C."/>
            <person name="Metzenberg R.L."/>
            <person name="Perkins D.D."/>
            <person name="Kroken S."/>
            <person name="Cogoni C."/>
            <person name="Macino G."/>
            <person name="Catcheside D.E.A."/>
            <person name="Li W."/>
            <person name="Pratt R.J."/>
            <person name="Osmani S.A."/>
            <person name="DeSouza C.P.C."/>
            <person name="Glass N.L."/>
            <person name="Orbach M.J."/>
            <person name="Berglund J.A."/>
            <person name="Voelker R."/>
            <person name="Yarden O."/>
            <person name="Plamann M."/>
            <person name="Seiler S."/>
            <person name="Dunlap J.C."/>
            <person name="Radford A."/>
            <person name="Aramayo R."/>
            <person name="Natvig D.O."/>
            <person name="Alex L.A."/>
            <person name="Mannhaupt G."/>
            <person name="Ebbole D.J."/>
            <person name="Freitag M."/>
            <person name="Paulsen I."/>
            <person name="Sachs M.S."/>
            <person name="Lander E.S."/>
            <person name="Nusbaum C."/>
            <person name="Birren B.W."/>
        </authorList>
    </citation>
    <scope>NUCLEOTIDE SEQUENCE [LARGE SCALE GENOMIC DNA]</scope>
    <source>
        <strain>ATCC 24698 / 74-OR23-1A / CBS 708.71 / DSM 1257 / FGSC 987</strain>
    </source>
</reference>